<evidence type="ECO:0000255" key="1">
    <source>
        <dbReference type="HAMAP-Rule" id="MF_01147"/>
    </source>
</evidence>
<sequence>MLQYPQIDPVALRIGPLAIHWYGLMYLIGFALVYALGRRRITSGHTTSMTVRDLEDLIFYSVLGVVLGGRLGYVLFYKPAYYLANPLEIFYLWEGGMSFHGGLIGVIVVMLLFAHKKRLGFFTVSDFIAPLIPLGLAAGRLGNFINGELWGRPTDVPWAMVFPQSGDGLPRHPSQLYELGLEGIVLFALLWWYSSKPRAAGQVSAMFLMGYGAFRFLVEFTREPDNFLGLLAAGLSMGQWLSIPMVLAGAGLYLFTARPPSR</sequence>
<comment type="function">
    <text evidence="1">Catalyzes the transfer of the diacylglyceryl group from phosphatidylglycerol to the sulfhydryl group of the N-terminal cysteine of a prolipoprotein, the first step in the formation of mature lipoproteins.</text>
</comment>
<comment type="catalytic activity">
    <reaction evidence="1">
        <text>L-cysteinyl-[prolipoprotein] + a 1,2-diacyl-sn-glycero-3-phospho-(1'-sn-glycerol) = an S-1,2-diacyl-sn-glyceryl-L-cysteinyl-[prolipoprotein] + sn-glycerol 1-phosphate + H(+)</text>
        <dbReference type="Rhea" id="RHEA:56712"/>
        <dbReference type="Rhea" id="RHEA-COMP:14679"/>
        <dbReference type="Rhea" id="RHEA-COMP:14680"/>
        <dbReference type="ChEBI" id="CHEBI:15378"/>
        <dbReference type="ChEBI" id="CHEBI:29950"/>
        <dbReference type="ChEBI" id="CHEBI:57685"/>
        <dbReference type="ChEBI" id="CHEBI:64716"/>
        <dbReference type="ChEBI" id="CHEBI:140658"/>
        <dbReference type="EC" id="2.5.1.145"/>
    </reaction>
</comment>
<comment type="pathway">
    <text evidence="1">Protein modification; lipoprotein biosynthesis (diacylglyceryl transfer).</text>
</comment>
<comment type="subcellular location">
    <subcellularLocation>
        <location evidence="1">Cell inner membrane</location>
        <topology evidence="1">Multi-pass membrane protein</topology>
    </subcellularLocation>
</comment>
<comment type="similarity">
    <text evidence="1">Belongs to the Lgt family.</text>
</comment>
<accession>Q7W496</accession>
<feature type="chain" id="PRO_0000172565" description="Phosphatidylglycerol--prolipoprotein diacylglyceryl transferase">
    <location>
        <begin position="1"/>
        <end position="262"/>
    </location>
</feature>
<feature type="transmembrane region" description="Helical" evidence="1">
    <location>
        <begin position="17"/>
        <end position="37"/>
    </location>
</feature>
<feature type="transmembrane region" description="Helical" evidence="1">
    <location>
        <begin position="57"/>
        <end position="77"/>
    </location>
</feature>
<feature type="transmembrane region" description="Helical" evidence="1">
    <location>
        <begin position="95"/>
        <end position="115"/>
    </location>
</feature>
<feature type="transmembrane region" description="Helical" evidence="1">
    <location>
        <begin position="119"/>
        <end position="139"/>
    </location>
</feature>
<feature type="transmembrane region" description="Helical" evidence="1">
    <location>
        <begin position="173"/>
        <end position="193"/>
    </location>
</feature>
<feature type="transmembrane region" description="Helical" evidence="1">
    <location>
        <begin position="200"/>
        <end position="220"/>
    </location>
</feature>
<feature type="transmembrane region" description="Helical" evidence="1">
    <location>
        <begin position="227"/>
        <end position="247"/>
    </location>
</feature>
<feature type="binding site" evidence="1">
    <location>
        <position position="140"/>
    </location>
    <ligand>
        <name>a 1,2-diacyl-sn-glycero-3-phospho-(1'-sn-glycerol)</name>
        <dbReference type="ChEBI" id="CHEBI:64716"/>
    </ligand>
</feature>
<protein>
    <recommendedName>
        <fullName evidence="1">Phosphatidylglycerol--prolipoprotein diacylglyceryl transferase</fullName>
        <ecNumber evidence="1">2.5.1.145</ecNumber>
    </recommendedName>
</protein>
<gene>
    <name evidence="1" type="primary">lgt</name>
    <name type="ordered locus">BPP3771</name>
</gene>
<organism>
    <name type="scientific">Bordetella parapertussis (strain 12822 / ATCC BAA-587 / NCTC 13253)</name>
    <dbReference type="NCBI Taxonomy" id="257311"/>
    <lineage>
        <taxon>Bacteria</taxon>
        <taxon>Pseudomonadati</taxon>
        <taxon>Pseudomonadota</taxon>
        <taxon>Betaproteobacteria</taxon>
        <taxon>Burkholderiales</taxon>
        <taxon>Alcaligenaceae</taxon>
        <taxon>Bordetella</taxon>
    </lineage>
</organism>
<name>LGT_BORPA</name>
<dbReference type="EC" id="2.5.1.145" evidence="1"/>
<dbReference type="EMBL" id="BX640434">
    <property type="protein sequence ID" value="CAE39054.1"/>
    <property type="molecule type" value="Genomic_DNA"/>
</dbReference>
<dbReference type="RefSeq" id="WP_010929237.1">
    <property type="nucleotide sequence ID" value="NC_002928.3"/>
</dbReference>
<dbReference type="SMR" id="Q7W496"/>
<dbReference type="GeneID" id="93205566"/>
<dbReference type="KEGG" id="bpa:BPP3771"/>
<dbReference type="HOGENOM" id="CLU_013386_1_0_4"/>
<dbReference type="UniPathway" id="UPA00664"/>
<dbReference type="Proteomes" id="UP000001421">
    <property type="component" value="Chromosome"/>
</dbReference>
<dbReference type="GO" id="GO:0005886">
    <property type="term" value="C:plasma membrane"/>
    <property type="evidence" value="ECO:0007669"/>
    <property type="project" value="UniProtKB-SubCell"/>
</dbReference>
<dbReference type="GO" id="GO:0008961">
    <property type="term" value="F:phosphatidylglycerol-prolipoprotein diacylglyceryl transferase activity"/>
    <property type="evidence" value="ECO:0007669"/>
    <property type="project" value="UniProtKB-UniRule"/>
</dbReference>
<dbReference type="GO" id="GO:0042158">
    <property type="term" value="P:lipoprotein biosynthetic process"/>
    <property type="evidence" value="ECO:0007669"/>
    <property type="project" value="UniProtKB-UniRule"/>
</dbReference>
<dbReference type="HAMAP" id="MF_01147">
    <property type="entry name" value="Lgt"/>
    <property type="match status" value="1"/>
</dbReference>
<dbReference type="InterPro" id="IPR001640">
    <property type="entry name" value="Lgt"/>
</dbReference>
<dbReference type="NCBIfam" id="TIGR00544">
    <property type="entry name" value="lgt"/>
    <property type="match status" value="1"/>
</dbReference>
<dbReference type="PANTHER" id="PTHR30589:SF0">
    <property type="entry name" value="PHOSPHATIDYLGLYCEROL--PROLIPOPROTEIN DIACYLGLYCERYL TRANSFERASE"/>
    <property type="match status" value="1"/>
</dbReference>
<dbReference type="PANTHER" id="PTHR30589">
    <property type="entry name" value="PROLIPOPROTEIN DIACYLGLYCERYL TRANSFERASE"/>
    <property type="match status" value="1"/>
</dbReference>
<dbReference type="Pfam" id="PF01790">
    <property type="entry name" value="LGT"/>
    <property type="match status" value="1"/>
</dbReference>
<dbReference type="PROSITE" id="PS01311">
    <property type="entry name" value="LGT"/>
    <property type="match status" value="1"/>
</dbReference>
<keyword id="KW-0997">Cell inner membrane</keyword>
<keyword id="KW-1003">Cell membrane</keyword>
<keyword id="KW-0472">Membrane</keyword>
<keyword id="KW-0808">Transferase</keyword>
<keyword id="KW-0812">Transmembrane</keyword>
<keyword id="KW-1133">Transmembrane helix</keyword>
<reference key="1">
    <citation type="journal article" date="2003" name="Nat. Genet.">
        <title>Comparative analysis of the genome sequences of Bordetella pertussis, Bordetella parapertussis and Bordetella bronchiseptica.</title>
        <authorList>
            <person name="Parkhill J."/>
            <person name="Sebaihia M."/>
            <person name="Preston A."/>
            <person name="Murphy L.D."/>
            <person name="Thomson N.R."/>
            <person name="Harris D.E."/>
            <person name="Holden M.T.G."/>
            <person name="Churcher C.M."/>
            <person name="Bentley S.D."/>
            <person name="Mungall K.L."/>
            <person name="Cerdeno-Tarraga A.-M."/>
            <person name="Temple L."/>
            <person name="James K.D."/>
            <person name="Harris B."/>
            <person name="Quail M.A."/>
            <person name="Achtman M."/>
            <person name="Atkin R."/>
            <person name="Baker S."/>
            <person name="Basham D."/>
            <person name="Bason N."/>
            <person name="Cherevach I."/>
            <person name="Chillingworth T."/>
            <person name="Collins M."/>
            <person name="Cronin A."/>
            <person name="Davis P."/>
            <person name="Doggett J."/>
            <person name="Feltwell T."/>
            <person name="Goble A."/>
            <person name="Hamlin N."/>
            <person name="Hauser H."/>
            <person name="Holroyd S."/>
            <person name="Jagels K."/>
            <person name="Leather S."/>
            <person name="Moule S."/>
            <person name="Norberczak H."/>
            <person name="O'Neil S."/>
            <person name="Ormond D."/>
            <person name="Price C."/>
            <person name="Rabbinowitsch E."/>
            <person name="Rutter S."/>
            <person name="Sanders M."/>
            <person name="Saunders D."/>
            <person name="Seeger K."/>
            <person name="Sharp S."/>
            <person name="Simmonds M."/>
            <person name="Skelton J."/>
            <person name="Squares R."/>
            <person name="Squares S."/>
            <person name="Stevens K."/>
            <person name="Unwin L."/>
            <person name="Whitehead S."/>
            <person name="Barrell B.G."/>
            <person name="Maskell D.J."/>
        </authorList>
    </citation>
    <scope>NUCLEOTIDE SEQUENCE [LARGE SCALE GENOMIC DNA]</scope>
    <source>
        <strain>12822 / ATCC BAA-587 / NCTC 13253</strain>
    </source>
</reference>
<proteinExistence type="inferred from homology"/>